<evidence type="ECO:0000255" key="1">
    <source>
        <dbReference type="HAMAP-Rule" id="MF_00191"/>
    </source>
</evidence>
<organism>
    <name type="scientific">Salmonella paratyphi A (strain AKU_12601)</name>
    <dbReference type="NCBI Taxonomy" id="554290"/>
    <lineage>
        <taxon>Bacteria</taxon>
        <taxon>Pseudomonadati</taxon>
        <taxon>Pseudomonadota</taxon>
        <taxon>Gammaproteobacteria</taxon>
        <taxon>Enterobacterales</taxon>
        <taxon>Enterobacteriaceae</taxon>
        <taxon>Salmonella</taxon>
    </lineage>
</organism>
<feature type="chain" id="PRO_1000098975" description="4-hydroxy-3-methylbut-2-enyl diphosphate reductase">
    <location>
        <begin position="1"/>
        <end position="316"/>
    </location>
</feature>
<feature type="active site" description="Proton donor" evidence="1">
    <location>
        <position position="126"/>
    </location>
</feature>
<feature type="binding site" evidence="1">
    <location>
        <position position="12"/>
    </location>
    <ligand>
        <name>[4Fe-4S] cluster</name>
        <dbReference type="ChEBI" id="CHEBI:49883"/>
    </ligand>
</feature>
<feature type="binding site" evidence="1">
    <location>
        <position position="41"/>
    </location>
    <ligand>
        <name>(2E)-4-hydroxy-3-methylbut-2-enyl diphosphate</name>
        <dbReference type="ChEBI" id="CHEBI:128753"/>
    </ligand>
</feature>
<feature type="binding site" evidence="1">
    <location>
        <position position="41"/>
    </location>
    <ligand>
        <name>dimethylallyl diphosphate</name>
        <dbReference type="ChEBI" id="CHEBI:57623"/>
    </ligand>
</feature>
<feature type="binding site" evidence="1">
    <location>
        <position position="41"/>
    </location>
    <ligand>
        <name>isopentenyl diphosphate</name>
        <dbReference type="ChEBI" id="CHEBI:128769"/>
    </ligand>
</feature>
<feature type="binding site" evidence="1">
    <location>
        <position position="74"/>
    </location>
    <ligand>
        <name>(2E)-4-hydroxy-3-methylbut-2-enyl diphosphate</name>
        <dbReference type="ChEBI" id="CHEBI:128753"/>
    </ligand>
</feature>
<feature type="binding site" evidence="1">
    <location>
        <position position="74"/>
    </location>
    <ligand>
        <name>dimethylallyl diphosphate</name>
        <dbReference type="ChEBI" id="CHEBI:57623"/>
    </ligand>
</feature>
<feature type="binding site" evidence="1">
    <location>
        <position position="74"/>
    </location>
    <ligand>
        <name>isopentenyl diphosphate</name>
        <dbReference type="ChEBI" id="CHEBI:128769"/>
    </ligand>
</feature>
<feature type="binding site" evidence="1">
    <location>
        <position position="96"/>
    </location>
    <ligand>
        <name>[4Fe-4S] cluster</name>
        <dbReference type="ChEBI" id="CHEBI:49883"/>
    </ligand>
</feature>
<feature type="binding site" evidence="1">
    <location>
        <position position="124"/>
    </location>
    <ligand>
        <name>(2E)-4-hydroxy-3-methylbut-2-enyl diphosphate</name>
        <dbReference type="ChEBI" id="CHEBI:128753"/>
    </ligand>
</feature>
<feature type="binding site" evidence="1">
    <location>
        <position position="124"/>
    </location>
    <ligand>
        <name>dimethylallyl diphosphate</name>
        <dbReference type="ChEBI" id="CHEBI:57623"/>
    </ligand>
</feature>
<feature type="binding site" evidence="1">
    <location>
        <position position="124"/>
    </location>
    <ligand>
        <name>isopentenyl diphosphate</name>
        <dbReference type="ChEBI" id="CHEBI:128769"/>
    </ligand>
</feature>
<feature type="binding site" evidence="1">
    <location>
        <position position="167"/>
    </location>
    <ligand>
        <name>(2E)-4-hydroxy-3-methylbut-2-enyl diphosphate</name>
        <dbReference type="ChEBI" id="CHEBI:128753"/>
    </ligand>
</feature>
<feature type="binding site" evidence="1">
    <location>
        <position position="197"/>
    </location>
    <ligand>
        <name>[4Fe-4S] cluster</name>
        <dbReference type="ChEBI" id="CHEBI:49883"/>
    </ligand>
</feature>
<feature type="binding site" evidence="1">
    <location>
        <position position="225"/>
    </location>
    <ligand>
        <name>(2E)-4-hydroxy-3-methylbut-2-enyl diphosphate</name>
        <dbReference type="ChEBI" id="CHEBI:128753"/>
    </ligand>
</feature>
<feature type="binding site" evidence="1">
    <location>
        <position position="225"/>
    </location>
    <ligand>
        <name>dimethylallyl diphosphate</name>
        <dbReference type="ChEBI" id="CHEBI:57623"/>
    </ligand>
</feature>
<feature type="binding site" evidence="1">
    <location>
        <position position="225"/>
    </location>
    <ligand>
        <name>isopentenyl diphosphate</name>
        <dbReference type="ChEBI" id="CHEBI:128769"/>
    </ligand>
</feature>
<feature type="binding site" evidence="1">
    <location>
        <position position="226"/>
    </location>
    <ligand>
        <name>(2E)-4-hydroxy-3-methylbut-2-enyl diphosphate</name>
        <dbReference type="ChEBI" id="CHEBI:128753"/>
    </ligand>
</feature>
<feature type="binding site" evidence="1">
    <location>
        <position position="226"/>
    </location>
    <ligand>
        <name>dimethylallyl diphosphate</name>
        <dbReference type="ChEBI" id="CHEBI:57623"/>
    </ligand>
</feature>
<feature type="binding site" evidence="1">
    <location>
        <position position="226"/>
    </location>
    <ligand>
        <name>isopentenyl diphosphate</name>
        <dbReference type="ChEBI" id="CHEBI:128769"/>
    </ligand>
</feature>
<feature type="binding site" evidence="1">
    <location>
        <position position="227"/>
    </location>
    <ligand>
        <name>(2E)-4-hydroxy-3-methylbut-2-enyl diphosphate</name>
        <dbReference type="ChEBI" id="CHEBI:128753"/>
    </ligand>
</feature>
<feature type="binding site" evidence="1">
    <location>
        <position position="227"/>
    </location>
    <ligand>
        <name>dimethylallyl diphosphate</name>
        <dbReference type="ChEBI" id="CHEBI:57623"/>
    </ligand>
</feature>
<feature type="binding site" evidence="1">
    <location>
        <position position="227"/>
    </location>
    <ligand>
        <name>isopentenyl diphosphate</name>
        <dbReference type="ChEBI" id="CHEBI:128769"/>
    </ligand>
</feature>
<feature type="binding site" evidence="1">
    <location>
        <position position="269"/>
    </location>
    <ligand>
        <name>(2E)-4-hydroxy-3-methylbut-2-enyl diphosphate</name>
        <dbReference type="ChEBI" id="CHEBI:128753"/>
    </ligand>
</feature>
<feature type="binding site" evidence="1">
    <location>
        <position position="269"/>
    </location>
    <ligand>
        <name>dimethylallyl diphosphate</name>
        <dbReference type="ChEBI" id="CHEBI:57623"/>
    </ligand>
</feature>
<feature type="binding site" evidence="1">
    <location>
        <position position="269"/>
    </location>
    <ligand>
        <name>isopentenyl diphosphate</name>
        <dbReference type="ChEBI" id="CHEBI:128769"/>
    </ligand>
</feature>
<proteinExistence type="inferred from homology"/>
<comment type="function">
    <text evidence="1">Catalyzes the conversion of 1-hydroxy-2-methyl-2-(E)-butenyl 4-diphosphate (HMBPP) into a mixture of isopentenyl diphosphate (IPP) and dimethylallyl diphosphate (DMAPP). Acts in the terminal step of the DOXP/MEP pathway for isoprenoid precursor biosynthesis.</text>
</comment>
<comment type="catalytic activity">
    <reaction evidence="1">
        <text>isopentenyl diphosphate + 2 oxidized [2Fe-2S]-[ferredoxin] + H2O = (2E)-4-hydroxy-3-methylbut-2-enyl diphosphate + 2 reduced [2Fe-2S]-[ferredoxin] + 2 H(+)</text>
        <dbReference type="Rhea" id="RHEA:24488"/>
        <dbReference type="Rhea" id="RHEA-COMP:10000"/>
        <dbReference type="Rhea" id="RHEA-COMP:10001"/>
        <dbReference type="ChEBI" id="CHEBI:15377"/>
        <dbReference type="ChEBI" id="CHEBI:15378"/>
        <dbReference type="ChEBI" id="CHEBI:33737"/>
        <dbReference type="ChEBI" id="CHEBI:33738"/>
        <dbReference type="ChEBI" id="CHEBI:128753"/>
        <dbReference type="ChEBI" id="CHEBI:128769"/>
        <dbReference type="EC" id="1.17.7.4"/>
    </reaction>
</comment>
<comment type="catalytic activity">
    <reaction evidence="1">
        <text>dimethylallyl diphosphate + 2 oxidized [2Fe-2S]-[ferredoxin] + H2O = (2E)-4-hydroxy-3-methylbut-2-enyl diphosphate + 2 reduced [2Fe-2S]-[ferredoxin] + 2 H(+)</text>
        <dbReference type="Rhea" id="RHEA:24825"/>
        <dbReference type="Rhea" id="RHEA-COMP:10000"/>
        <dbReference type="Rhea" id="RHEA-COMP:10001"/>
        <dbReference type="ChEBI" id="CHEBI:15377"/>
        <dbReference type="ChEBI" id="CHEBI:15378"/>
        <dbReference type="ChEBI" id="CHEBI:33737"/>
        <dbReference type="ChEBI" id="CHEBI:33738"/>
        <dbReference type="ChEBI" id="CHEBI:57623"/>
        <dbReference type="ChEBI" id="CHEBI:128753"/>
        <dbReference type="EC" id="1.17.7.4"/>
    </reaction>
</comment>
<comment type="cofactor">
    <cofactor evidence="1">
        <name>[4Fe-4S] cluster</name>
        <dbReference type="ChEBI" id="CHEBI:49883"/>
    </cofactor>
    <text evidence="1">Binds 1 [4Fe-4S] cluster per subunit.</text>
</comment>
<comment type="pathway">
    <text evidence="1">Isoprenoid biosynthesis; dimethylallyl diphosphate biosynthesis; dimethylallyl diphosphate from (2E)-4-hydroxy-3-methylbutenyl diphosphate: step 1/1.</text>
</comment>
<comment type="pathway">
    <text evidence="1">Isoprenoid biosynthesis; isopentenyl diphosphate biosynthesis via DXP pathway; isopentenyl diphosphate from 1-deoxy-D-xylulose 5-phosphate: step 6/6.</text>
</comment>
<comment type="subunit">
    <text evidence="1">Homodimer.</text>
</comment>
<comment type="similarity">
    <text evidence="1">Belongs to the IspH family.</text>
</comment>
<name>ISPH_SALPK</name>
<dbReference type="EC" id="1.17.7.4" evidence="1"/>
<dbReference type="EMBL" id="FM200053">
    <property type="protein sequence ID" value="CAR58157.1"/>
    <property type="molecule type" value="Genomic_DNA"/>
</dbReference>
<dbReference type="RefSeq" id="WP_001166415.1">
    <property type="nucleotide sequence ID" value="NC_011147.1"/>
</dbReference>
<dbReference type="SMR" id="B5BLL3"/>
<dbReference type="KEGG" id="sek:SSPA0046"/>
<dbReference type="HOGENOM" id="CLU_027486_1_0_6"/>
<dbReference type="UniPathway" id="UPA00056">
    <property type="reaction ID" value="UER00097"/>
</dbReference>
<dbReference type="UniPathway" id="UPA00059">
    <property type="reaction ID" value="UER00105"/>
</dbReference>
<dbReference type="Proteomes" id="UP000001869">
    <property type="component" value="Chromosome"/>
</dbReference>
<dbReference type="GO" id="GO:0051539">
    <property type="term" value="F:4 iron, 4 sulfur cluster binding"/>
    <property type="evidence" value="ECO:0007669"/>
    <property type="project" value="UniProtKB-UniRule"/>
</dbReference>
<dbReference type="GO" id="GO:0051745">
    <property type="term" value="F:4-hydroxy-3-methylbut-2-enyl diphosphate reductase activity"/>
    <property type="evidence" value="ECO:0007669"/>
    <property type="project" value="UniProtKB-UniRule"/>
</dbReference>
<dbReference type="GO" id="GO:0046872">
    <property type="term" value="F:metal ion binding"/>
    <property type="evidence" value="ECO:0007669"/>
    <property type="project" value="UniProtKB-KW"/>
</dbReference>
<dbReference type="GO" id="GO:0050992">
    <property type="term" value="P:dimethylallyl diphosphate biosynthetic process"/>
    <property type="evidence" value="ECO:0007669"/>
    <property type="project" value="UniProtKB-UniRule"/>
</dbReference>
<dbReference type="GO" id="GO:0019288">
    <property type="term" value="P:isopentenyl diphosphate biosynthetic process, methylerythritol 4-phosphate pathway"/>
    <property type="evidence" value="ECO:0007669"/>
    <property type="project" value="UniProtKB-UniRule"/>
</dbReference>
<dbReference type="GO" id="GO:0016114">
    <property type="term" value="P:terpenoid biosynthetic process"/>
    <property type="evidence" value="ECO:0007669"/>
    <property type="project" value="UniProtKB-UniRule"/>
</dbReference>
<dbReference type="CDD" id="cd13944">
    <property type="entry name" value="lytB_ispH"/>
    <property type="match status" value="1"/>
</dbReference>
<dbReference type="FunFam" id="3.40.1010.20:FF:000001">
    <property type="entry name" value="4-hydroxy-3-methylbut-2-enyl diphosphate reductase"/>
    <property type="match status" value="1"/>
</dbReference>
<dbReference type="FunFam" id="3.40.50.11270:FF:000001">
    <property type="entry name" value="4-hydroxy-3-methylbut-2-enyl diphosphate reductase"/>
    <property type="match status" value="1"/>
</dbReference>
<dbReference type="Gene3D" id="3.40.50.11270">
    <property type="match status" value="1"/>
</dbReference>
<dbReference type="Gene3D" id="3.40.1010.20">
    <property type="entry name" value="4-hydroxy-3-methylbut-2-enyl diphosphate reductase, catalytic domain"/>
    <property type="match status" value="2"/>
</dbReference>
<dbReference type="HAMAP" id="MF_00191">
    <property type="entry name" value="IspH"/>
    <property type="match status" value="1"/>
</dbReference>
<dbReference type="InterPro" id="IPR003451">
    <property type="entry name" value="LytB/IspH"/>
</dbReference>
<dbReference type="NCBIfam" id="TIGR00216">
    <property type="entry name" value="ispH_lytB"/>
    <property type="match status" value="1"/>
</dbReference>
<dbReference type="NCBIfam" id="NF002188">
    <property type="entry name" value="PRK01045.1-2"/>
    <property type="match status" value="1"/>
</dbReference>
<dbReference type="NCBIfam" id="NF002190">
    <property type="entry name" value="PRK01045.1-4"/>
    <property type="match status" value="1"/>
</dbReference>
<dbReference type="PANTHER" id="PTHR30426">
    <property type="entry name" value="4-HYDROXY-3-METHYLBUT-2-ENYL DIPHOSPHATE REDUCTASE"/>
    <property type="match status" value="1"/>
</dbReference>
<dbReference type="PANTHER" id="PTHR30426:SF0">
    <property type="entry name" value="4-HYDROXY-3-METHYLBUT-2-ENYL DIPHOSPHATE REDUCTASE"/>
    <property type="match status" value="1"/>
</dbReference>
<dbReference type="Pfam" id="PF02401">
    <property type="entry name" value="LYTB"/>
    <property type="match status" value="1"/>
</dbReference>
<sequence length="316" mass="34497">MQILLANPRGFCAGVDRAISIVENALAIYGAPIYVRHEVVHNRYVVDSLRKRGAIFIEQISEVPDGAILIFSAHGVSQAVRNEAKSRDLTVFDATCPLVTKVHMEVARASRRGEESILIGHAGHPEVEGTMGQYSNPEGGMFLVESPEDVWTLNVKNEGKLSFMTQTTLSVDDTSDVIDALRKRFPKIVGPRKDDICYATTNRQEAVRALAEQADVVLVVGSKNSSNSNRLAELAQRMGRTAFLIDDAADIQEAWVKDAACVGVTAGASAPDILVQNVIARLREFGGGEAVTLEGREENIVFEVPKELRVDVREVE</sequence>
<gene>
    <name evidence="1" type="primary">ispH</name>
    <name type="ordered locus">SSPA0046</name>
</gene>
<protein>
    <recommendedName>
        <fullName evidence="1">4-hydroxy-3-methylbut-2-enyl diphosphate reductase</fullName>
        <shortName evidence="1">HMBPP reductase</shortName>
        <ecNumber evidence="1">1.17.7.4</ecNumber>
    </recommendedName>
</protein>
<accession>B5BLL3</accession>
<keyword id="KW-0004">4Fe-4S</keyword>
<keyword id="KW-0408">Iron</keyword>
<keyword id="KW-0411">Iron-sulfur</keyword>
<keyword id="KW-0414">Isoprene biosynthesis</keyword>
<keyword id="KW-0479">Metal-binding</keyword>
<keyword id="KW-0560">Oxidoreductase</keyword>
<reference key="1">
    <citation type="journal article" date="2009" name="BMC Genomics">
        <title>Pseudogene accumulation in the evolutionary histories of Salmonella enterica serovars Paratyphi A and Typhi.</title>
        <authorList>
            <person name="Holt K.E."/>
            <person name="Thomson N.R."/>
            <person name="Wain J."/>
            <person name="Langridge G.C."/>
            <person name="Hasan R."/>
            <person name="Bhutta Z.A."/>
            <person name="Quail M.A."/>
            <person name="Norbertczak H."/>
            <person name="Walker D."/>
            <person name="Simmonds M."/>
            <person name="White B."/>
            <person name="Bason N."/>
            <person name="Mungall K."/>
            <person name="Dougan G."/>
            <person name="Parkhill J."/>
        </authorList>
    </citation>
    <scope>NUCLEOTIDE SEQUENCE [LARGE SCALE GENOMIC DNA]</scope>
    <source>
        <strain>AKU_12601</strain>
    </source>
</reference>